<dbReference type="EMBL" id="D00382">
    <property type="protein sequence ID" value="BAA00290.1"/>
    <property type="molecule type" value="Genomic_DNA"/>
</dbReference>
<dbReference type="EMBL" id="AY243312">
    <property type="protein sequence ID" value="AAO89315.1"/>
    <property type="molecule type" value="Genomic_DNA"/>
</dbReference>
<dbReference type="PIR" id="JS0214">
    <property type="entry name" value="WMVZK4"/>
</dbReference>
<dbReference type="RefSeq" id="YP_232918.1">
    <property type="nucleotide sequence ID" value="NC_006998.1"/>
</dbReference>
<dbReference type="SMR" id="P18379"/>
<dbReference type="ESTHER" id="cowvi-M5L">
    <property type="family name" value="Monoglyceridelipase_lysophospholip"/>
</dbReference>
<dbReference type="DNASU" id="3707494"/>
<dbReference type="GeneID" id="3707494"/>
<dbReference type="KEGG" id="vg:3707494"/>
<dbReference type="Proteomes" id="UP000000344">
    <property type="component" value="Genome"/>
</dbReference>
<dbReference type="Gene3D" id="3.40.50.1820">
    <property type="entry name" value="alpha/beta hydrolase"/>
    <property type="match status" value="1"/>
</dbReference>
<dbReference type="InterPro" id="IPR029058">
    <property type="entry name" value="AB_hydrolase_fold"/>
</dbReference>
<protein>
    <recommendedName>
        <fullName>Uncharacterized protein 36</fullName>
    </recommendedName>
</protein>
<feature type="chain" id="PRO_0000099745" description="Uncharacterized protein 36">
    <location>
        <begin position="1"/>
        <end position="44"/>
    </location>
</feature>
<organism>
    <name type="scientific">Vaccinia virus (strain Western Reserve)</name>
    <name type="common">VACV</name>
    <name type="synonym">Vaccinia virus (strain WR)</name>
    <dbReference type="NCBI Taxonomy" id="10254"/>
    <lineage>
        <taxon>Viruses</taxon>
        <taxon>Varidnaviria</taxon>
        <taxon>Bamfordvirae</taxon>
        <taxon>Nucleocytoviricota</taxon>
        <taxon>Pokkesviricetes</taxon>
        <taxon>Chitovirales</taxon>
        <taxon>Poxviridae</taxon>
        <taxon>Chordopoxvirinae</taxon>
        <taxon>Orthopoxvirus</taxon>
        <taxon>Vaccinia virus</taxon>
    </lineage>
</organism>
<proteinExistence type="predicted"/>
<gene>
    <name type="primary">VACWR036</name>
</gene>
<keyword id="KW-1185">Reference proteome</keyword>
<organismHost>
    <name type="scientific">Bos taurus</name>
    <name type="common">Bovine</name>
    <dbReference type="NCBI Taxonomy" id="9913"/>
</organismHost>
<name>Y36_VACCW</name>
<sequence>MQHANCNREIKIYEGAKHHLHKETDEVKKSVMKEIETWIFNRVK</sequence>
<accession>P18379</accession>
<accession>Q76ZX5</accession>
<reference key="1">
    <citation type="journal article" date="1988" name="J. Gen. Virol.">
        <title>Non-essential genes in the vaccinia virus HindIII K fragment: a gene related to serine protease inhibitors and a gene related to the 37K vaccinia virus major envelope antigen.</title>
        <authorList>
            <person name="Boursnell M.E.G."/>
            <person name="Foulds I.J."/>
            <person name="Campbell J.I."/>
            <person name="Binns M.M."/>
        </authorList>
    </citation>
    <scope>NUCLEOTIDE SEQUENCE [GENOMIC DNA]</scope>
</reference>
<reference key="2">
    <citation type="submission" date="2003-02" db="EMBL/GenBank/DDBJ databases">
        <title>Sequencing of the coding region of Vaccinia-WR to an average 9-fold redundancy and an error rate of 0.16/10kb.</title>
        <authorList>
            <person name="Esposito J.J."/>
            <person name="Frace A.M."/>
            <person name="Sammons S.A."/>
            <person name="Olsen-Rasmussen M."/>
            <person name="Osborne J."/>
            <person name="Wohlhueter R."/>
        </authorList>
    </citation>
    <scope>NUCLEOTIDE SEQUENCE [LARGE SCALE GENOMIC DNA]</scope>
</reference>